<evidence type="ECO:0000255" key="1">
    <source>
        <dbReference type="HAMAP-Rule" id="MF_01661"/>
    </source>
</evidence>
<dbReference type="EC" id="5.4.99.62" evidence="1"/>
<dbReference type="EMBL" id="AE015927">
    <property type="protein sequence ID" value="AAO36825.1"/>
    <property type="molecule type" value="Genomic_DNA"/>
</dbReference>
<dbReference type="RefSeq" id="WP_011100486.1">
    <property type="nucleotide sequence ID" value="NC_004557.1"/>
</dbReference>
<dbReference type="SMR" id="Q891M0"/>
<dbReference type="STRING" id="212717.CTC_02351"/>
<dbReference type="GeneID" id="24254082"/>
<dbReference type="KEGG" id="ctc:CTC_02351"/>
<dbReference type="HOGENOM" id="CLU_135498_0_0_9"/>
<dbReference type="OrthoDB" id="9805009at2"/>
<dbReference type="UniPathway" id="UPA00916">
    <property type="reaction ID" value="UER00888"/>
</dbReference>
<dbReference type="Proteomes" id="UP000001412">
    <property type="component" value="Chromosome"/>
</dbReference>
<dbReference type="GO" id="GO:0005829">
    <property type="term" value="C:cytosol"/>
    <property type="evidence" value="ECO:0007669"/>
    <property type="project" value="TreeGrafter"/>
</dbReference>
<dbReference type="GO" id="GO:0062193">
    <property type="term" value="F:D-ribose pyranase activity"/>
    <property type="evidence" value="ECO:0007669"/>
    <property type="project" value="UniProtKB-EC"/>
</dbReference>
<dbReference type="GO" id="GO:0016872">
    <property type="term" value="F:intramolecular lyase activity"/>
    <property type="evidence" value="ECO:0007669"/>
    <property type="project" value="UniProtKB-UniRule"/>
</dbReference>
<dbReference type="GO" id="GO:0048029">
    <property type="term" value="F:monosaccharide binding"/>
    <property type="evidence" value="ECO:0007669"/>
    <property type="project" value="InterPro"/>
</dbReference>
<dbReference type="GO" id="GO:0019303">
    <property type="term" value="P:D-ribose catabolic process"/>
    <property type="evidence" value="ECO:0007669"/>
    <property type="project" value="UniProtKB-UniRule"/>
</dbReference>
<dbReference type="Gene3D" id="3.40.1650.10">
    <property type="entry name" value="RbsD-like domain"/>
    <property type="match status" value="1"/>
</dbReference>
<dbReference type="HAMAP" id="MF_01661">
    <property type="entry name" value="D_rib_pyranase"/>
    <property type="match status" value="1"/>
</dbReference>
<dbReference type="InterPro" id="IPR023064">
    <property type="entry name" value="D-ribose_pyranase"/>
</dbReference>
<dbReference type="InterPro" id="IPR023750">
    <property type="entry name" value="RbsD-like_sf"/>
</dbReference>
<dbReference type="InterPro" id="IPR007721">
    <property type="entry name" value="RbsD_FucU"/>
</dbReference>
<dbReference type="NCBIfam" id="NF008761">
    <property type="entry name" value="PRK11797.1"/>
    <property type="match status" value="1"/>
</dbReference>
<dbReference type="PANTHER" id="PTHR37831">
    <property type="entry name" value="D-RIBOSE PYRANASE"/>
    <property type="match status" value="1"/>
</dbReference>
<dbReference type="PANTHER" id="PTHR37831:SF1">
    <property type="entry name" value="D-RIBOSE PYRANASE"/>
    <property type="match status" value="1"/>
</dbReference>
<dbReference type="Pfam" id="PF05025">
    <property type="entry name" value="RbsD_FucU"/>
    <property type="match status" value="1"/>
</dbReference>
<dbReference type="SUPFAM" id="SSF102546">
    <property type="entry name" value="RbsD-like"/>
    <property type="match status" value="1"/>
</dbReference>
<protein>
    <recommendedName>
        <fullName evidence="1">D-ribose pyranase</fullName>
        <ecNumber evidence="1">5.4.99.62</ecNumber>
    </recommendedName>
</protein>
<keyword id="KW-0119">Carbohydrate metabolism</keyword>
<keyword id="KW-0963">Cytoplasm</keyword>
<keyword id="KW-0413">Isomerase</keyword>
<keyword id="KW-1185">Reference proteome</keyword>
<sequence>MKKIGILNNEISHVISKMGHTDSLAIGDCGLPIPEETKRIDLALIKNIPTFMDTLKSVMMELQVEEVQIANETQDLSSELFKEIKKQLGHAKITFISHEELKNNLKHCKAVIRTGEQTPYANIILKSGVVF</sequence>
<name>RBSD_CLOTE</name>
<feature type="chain" id="PRO_0000346188" description="D-ribose pyranase">
    <location>
        <begin position="1"/>
        <end position="131"/>
    </location>
</feature>
<feature type="active site" description="Proton donor" evidence="1">
    <location>
        <position position="20"/>
    </location>
</feature>
<feature type="binding site" evidence="1">
    <location>
        <position position="28"/>
    </location>
    <ligand>
        <name>substrate</name>
    </ligand>
</feature>
<feature type="binding site" evidence="1">
    <location>
        <position position="98"/>
    </location>
    <ligand>
        <name>substrate</name>
    </ligand>
</feature>
<feature type="binding site" evidence="1">
    <location>
        <begin position="120"/>
        <end position="122"/>
    </location>
    <ligand>
        <name>substrate</name>
    </ligand>
</feature>
<comment type="function">
    <text evidence="1">Catalyzes the interconversion of beta-pyran and beta-furan forms of D-ribose.</text>
</comment>
<comment type="catalytic activity">
    <reaction evidence="1">
        <text>beta-D-ribopyranose = beta-D-ribofuranose</text>
        <dbReference type="Rhea" id="RHEA:25432"/>
        <dbReference type="ChEBI" id="CHEBI:27476"/>
        <dbReference type="ChEBI" id="CHEBI:47002"/>
        <dbReference type="EC" id="5.4.99.62"/>
    </reaction>
</comment>
<comment type="pathway">
    <text evidence="1">Carbohydrate metabolism; D-ribose degradation; D-ribose 5-phosphate from beta-D-ribopyranose: step 1/2.</text>
</comment>
<comment type="subunit">
    <text evidence="1">Homodecamer.</text>
</comment>
<comment type="subcellular location">
    <subcellularLocation>
        <location evidence="1">Cytoplasm</location>
    </subcellularLocation>
</comment>
<comment type="similarity">
    <text evidence="1">Belongs to the RbsD / FucU family. RbsD subfamily.</text>
</comment>
<reference key="1">
    <citation type="journal article" date="2003" name="Proc. Natl. Acad. Sci. U.S.A.">
        <title>The genome sequence of Clostridium tetani, the causative agent of tetanus disease.</title>
        <authorList>
            <person name="Brueggemann H."/>
            <person name="Baeumer S."/>
            <person name="Fricke W.F."/>
            <person name="Wiezer A."/>
            <person name="Liesegang H."/>
            <person name="Decker I."/>
            <person name="Herzberg C."/>
            <person name="Martinez-Arias R."/>
            <person name="Merkl R."/>
            <person name="Henne A."/>
            <person name="Gottschalk G."/>
        </authorList>
    </citation>
    <scope>NUCLEOTIDE SEQUENCE [LARGE SCALE GENOMIC DNA]</scope>
    <source>
        <strain>Massachusetts / E88</strain>
    </source>
</reference>
<proteinExistence type="inferred from homology"/>
<accession>Q891M0</accession>
<organism>
    <name type="scientific">Clostridium tetani (strain Massachusetts / E88)</name>
    <dbReference type="NCBI Taxonomy" id="212717"/>
    <lineage>
        <taxon>Bacteria</taxon>
        <taxon>Bacillati</taxon>
        <taxon>Bacillota</taxon>
        <taxon>Clostridia</taxon>
        <taxon>Eubacteriales</taxon>
        <taxon>Clostridiaceae</taxon>
        <taxon>Clostridium</taxon>
    </lineage>
</organism>
<gene>
    <name evidence="1" type="primary">rbsD</name>
    <name type="ordered locus">CTC_02351</name>
</gene>